<dbReference type="EC" id="2.7.11.5" evidence="1"/>
<dbReference type="EC" id="3.1.3.-" evidence="1"/>
<dbReference type="EMBL" id="CP000857">
    <property type="protein sequence ID" value="ACN48308.1"/>
    <property type="molecule type" value="Genomic_DNA"/>
</dbReference>
<dbReference type="RefSeq" id="WP_001137275.1">
    <property type="nucleotide sequence ID" value="NC_012125.1"/>
</dbReference>
<dbReference type="SMR" id="C0Q489"/>
<dbReference type="KEGG" id="sei:SPC_4245"/>
<dbReference type="HOGENOM" id="CLU_033804_1_1_6"/>
<dbReference type="Proteomes" id="UP000001599">
    <property type="component" value="Chromosome"/>
</dbReference>
<dbReference type="GO" id="GO:0005737">
    <property type="term" value="C:cytoplasm"/>
    <property type="evidence" value="ECO:0007669"/>
    <property type="project" value="UniProtKB-SubCell"/>
</dbReference>
<dbReference type="GO" id="GO:0008772">
    <property type="term" value="F:[isocitrate dehydrogenase (NADP+)] kinase activity"/>
    <property type="evidence" value="ECO:0007669"/>
    <property type="project" value="UniProtKB-UniRule"/>
</dbReference>
<dbReference type="GO" id="GO:0016208">
    <property type="term" value="F:AMP binding"/>
    <property type="evidence" value="ECO:0007669"/>
    <property type="project" value="TreeGrafter"/>
</dbReference>
<dbReference type="GO" id="GO:0005524">
    <property type="term" value="F:ATP binding"/>
    <property type="evidence" value="ECO:0007669"/>
    <property type="project" value="UniProtKB-UniRule"/>
</dbReference>
<dbReference type="GO" id="GO:0004721">
    <property type="term" value="F:phosphoprotein phosphatase activity"/>
    <property type="evidence" value="ECO:0007669"/>
    <property type="project" value="UniProtKB-KW"/>
</dbReference>
<dbReference type="GO" id="GO:0004674">
    <property type="term" value="F:protein serine/threonine kinase activity"/>
    <property type="evidence" value="ECO:0007669"/>
    <property type="project" value="UniProtKB-KW"/>
</dbReference>
<dbReference type="GO" id="GO:0006006">
    <property type="term" value="P:glucose metabolic process"/>
    <property type="evidence" value="ECO:0007669"/>
    <property type="project" value="InterPro"/>
</dbReference>
<dbReference type="GO" id="GO:0006097">
    <property type="term" value="P:glyoxylate cycle"/>
    <property type="evidence" value="ECO:0007669"/>
    <property type="project" value="UniProtKB-UniRule"/>
</dbReference>
<dbReference type="GO" id="GO:0006099">
    <property type="term" value="P:tricarboxylic acid cycle"/>
    <property type="evidence" value="ECO:0007669"/>
    <property type="project" value="UniProtKB-UniRule"/>
</dbReference>
<dbReference type="HAMAP" id="MF_00747">
    <property type="entry name" value="AceK"/>
    <property type="match status" value="1"/>
</dbReference>
<dbReference type="InterPro" id="IPR046855">
    <property type="entry name" value="AceK_kinase"/>
</dbReference>
<dbReference type="InterPro" id="IPR046854">
    <property type="entry name" value="AceK_regulatory"/>
</dbReference>
<dbReference type="InterPro" id="IPR010452">
    <property type="entry name" value="Isocitrate_DH_AceK"/>
</dbReference>
<dbReference type="NCBIfam" id="NF002804">
    <property type="entry name" value="PRK02946.1"/>
    <property type="match status" value="1"/>
</dbReference>
<dbReference type="PANTHER" id="PTHR39559">
    <property type="match status" value="1"/>
</dbReference>
<dbReference type="PANTHER" id="PTHR39559:SF1">
    <property type="entry name" value="ISOCITRATE DEHYDROGENASE KINASE_PHOSPHATASE"/>
    <property type="match status" value="1"/>
</dbReference>
<dbReference type="Pfam" id="PF06315">
    <property type="entry name" value="AceK_kinase"/>
    <property type="match status" value="1"/>
</dbReference>
<dbReference type="Pfam" id="PF20423">
    <property type="entry name" value="AceK_regulatory"/>
    <property type="match status" value="1"/>
</dbReference>
<dbReference type="PIRSF" id="PIRSF000719">
    <property type="entry name" value="AceK"/>
    <property type="match status" value="1"/>
</dbReference>
<accession>C0Q489</accession>
<feature type="chain" id="PRO_1000148341" description="Isocitrate dehydrogenase kinase/phosphatase">
    <location>
        <begin position="1"/>
        <end position="583"/>
    </location>
</feature>
<feature type="active site" evidence="1">
    <location>
        <position position="371"/>
    </location>
</feature>
<feature type="binding site" evidence="1">
    <location>
        <begin position="315"/>
        <end position="321"/>
    </location>
    <ligand>
        <name>ATP</name>
        <dbReference type="ChEBI" id="CHEBI:30616"/>
    </ligand>
</feature>
<feature type="binding site" evidence="1">
    <location>
        <position position="336"/>
    </location>
    <ligand>
        <name>ATP</name>
        <dbReference type="ChEBI" id="CHEBI:30616"/>
    </ligand>
</feature>
<gene>
    <name evidence="1" type="primary">aceK</name>
    <name type="ordered locus">SPC_4245</name>
</gene>
<keyword id="KW-0067">ATP-binding</keyword>
<keyword id="KW-0963">Cytoplasm</keyword>
<keyword id="KW-0329">Glyoxylate bypass</keyword>
<keyword id="KW-0378">Hydrolase</keyword>
<keyword id="KW-0418">Kinase</keyword>
<keyword id="KW-0547">Nucleotide-binding</keyword>
<keyword id="KW-0904">Protein phosphatase</keyword>
<keyword id="KW-0723">Serine/threonine-protein kinase</keyword>
<keyword id="KW-0808">Transferase</keyword>
<keyword id="KW-0816">Tricarboxylic acid cycle</keyword>
<proteinExistence type="inferred from homology"/>
<protein>
    <recommendedName>
        <fullName evidence="1">Isocitrate dehydrogenase kinase/phosphatase</fullName>
        <shortName evidence="1">IDH kinase/phosphatase</shortName>
        <shortName evidence="1">IDHK/P</shortName>
        <ecNumber evidence="1">2.7.11.5</ecNumber>
        <ecNumber evidence="1">3.1.3.-</ecNumber>
    </recommendedName>
</protein>
<sequence>MPRGLELLIAQTILQGFDAQYGRFLEVTSGAQQRFEQADWHAVQQAMKSRIHLYDHHVGLVVEQLRCITDGKSTDADFLLRVKEHYTRLLPDYPRFEIAESFFNSVYCRLFDHRSLTPERLFIFSSQPERRFRTIPRPLAKDFFPDHGWETLLMRILSDLPLRLPWQNKSRDIRYIIAHLTETLGEDALPRCHVQVANELFYRNKAAWLVGKLTTPDGTLPFLLPIHRTDEGELFVDTCLTTTAEASIVFGFARSYFMVYAPLPAALVEWLREILPGKTTAELYMAIGCQKHAKTESYREYLCYLAESDEKFIEAPGIRGMVMLVFTLPGFDRVFKIIKDKFAPQKEMSAAHVRACYQLVKEHDRVGRMADTQEFENFVLDKRQIDPALMALLRQEAPEKITDLGEHIVIRHLYIERRMVPLNIWLEQVEGQQLRDAIEEYGNAIRQLAAANIFPGDMLFKNFGVTRHGRVVFYDYDEICYMTEVNFRDIPPARYPEDELASEPWYSVSPGDVFPEEFRHWLCADPRIGPLFEEMHADLFRADYWRALQTRIKEGHVEDVYAYRRRQRFSVRYGAISSTANSS</sequence>
<evidence type="ECO:0000255" key="1">
    <source>
        <dbReference type="HAMAP-Rule" id="MF_00747"/>
    </source>
</evidence>
<name>ACEK_SALPC</name>
<comment type="function">
    <text evidence="1">Bifunctional enzyme which can phosphorylate or dephosphorylate isocitrate dehydrogenase (IDH) on a specific serine residue. This is a regulatory mechanism which enables bacteria to bypass the Krebs cycle via the glyoxylate shunt in response to the source of carbon. When bacteria are grown on glucose, IDH is fully active and unphosphorylated, but when grown on acetate or ethanol, the activity of IDH declines drastically concomitant with its phosphorylation.</text>
</comment>
<comment type="catalytic activity">
    <reaction evidence="1">
        <text>L-seryl-[isocitrate dehydrogenase] + ATP = O-phospho-L-seryl-[isocitrate dehydrogenase] + ADP + H(+)</text>
        <dbReference type="Rhea" id="RHEA:43540"/>
        <dbReference type="Rhea" id="RHEA-COMP:10605"/>
        <dbReference type="Rhea" id="RHEA-COMP:10606"/>
        <dbReference type="ChEBI" id="CHEBI:15378"/>
        <dbReference type="ChEBI" id="CHEBI:29999"/>
        <dbReference type="ChEBI" id="CHEBI:30616"/>
        <dbReference type="ChEBI" id="CHEBI:83421"/>
        <dbReference type="ChEBI" id="CHEBI:456216"/>
        <dbReference type="EC" id="2.7.11.5"/>
    </reaction>
</comment>
<comment type="subcellular location">
    <subcellularLocation>
        <location evidence="1">Cytoplasm</location>
    </subcellularLocation>
</comment>
<comment type="similarity">
    <text evidence="1">Belongs to the AceK family.</text>
</comment>
<reference key="1">
    <citation type="journal article" date="2009" name="PLoS ONE">
        <title>Salmonella paratyphi C: genetic divergence from Salmonella choleraesuis and pathogenic convergence with Salmonella typhi.</title>
        <authorList>
            <person name="Liu W.-Q."/>
            <person name="Feng Y."/>
            <person name="Wang Y."/>
            <person name="Zou Q.-H."/>
            <person name="Chen F."/>
            <person name="Guo J.-T."/>
            <person name="Peng Y.-H."/>
            <person name="Jin Y."/>
            <person name="Li Y.-G."/>
            <person name="Hu S.-N."/>
            <person name="Johnston R.N."/>
            <person name="Liu G.-R."/>
            <person name="Liu S.-L."/>
        </authorList>
    </citation>
    <scope>NUCLEOTIDE SEQUENCE [LARGE SCALE GENOMIC DNA]</scope>
    <source>
        <strain>RKS4594</strain>
    </source>
</reference>
<organism>
    <name type="scientific">Salmonella paratyphi C (strain RKS4594)</name>
    <dbReference type="NCBI Taxonomy" id="476213"/>
    <lineage>
        <taxon>Bacteria</taxon>
        <taxon>Pseudomonadati</taxon>
        <taxon>Pseudomonadota</taxon>
        <taxon>Gammaproteobacteria</taxon>
        <taxon>Enterobacterales</taxon>
        <taxon>Enterobacteriaceae</taxon>
        <taxon>Salmonella</taxon>
    </lineage>
</organism>